<sequence length="335" mass="36100">MTLPLLGPMSLSGFEHSWFFLFIFIVFGLAAFYVMMQVARQRRMLRFANMELLESVAPNRPVQWRHVPAILLMLALLLFTIAMAGPTNDVRIPRNRAVVMLVIDVSQSMRATDVEPNRMAAAQEAAKQFAGELTPGINLGLIAYAGTATVLVSPTTNRYATKNALDKLQFADRTATGEAIFTALQAIATVGAVIGGGEMPPPARIVLFSDGKETMPTNPDNPKGAYTAARTAKDQGVPISTISFGTVYGFVEINGQRQPVPVDDETMKKVAQLSGGNSYNAATLAELKAVYASLQQQIGYETIKGDASAGWLRLGVLVLALAALTALLINRRLPT</sequence>
<protein>
    <recommendedName>
        <fullName evidence="1">UPF0353 protein MLBr01808</fullName>
    </recommendedName>
</protein>
<keyword id="KW-1003">Cell membrane</keyword>
<keyword id="KW-0472">Membrane</keyword>
<keyword id="KW-0812">Transmembrane</keyword>
<keyword id="KW-1133">Transmembrane helix</keyword>
<dbReference type="EMBL" id="FM211192">
    <property type="protein sequence ID" value="CAR71903.1"/>
    <property type="molecule type" value="Genomic_DNA"/>
</dbReference>
<dbReference type="SMR" id="B8ZS82"/>
<dbReference type="KEGG" id="mlb:MLBr01808"/>
<dbReference type="HOGENOM" id="CLU_024570_2_0_11"/>
<dbReference type="Proteomes" id="UP000006900">
    <property type="component" value="Chromosome"/>
</dbReference>
<dbReference type="GO" id="GO:0005886">
    <property type="term" value="C:plasma membrane"/>
    <property type="evidence" value="ECO:0007669"/>
    <property type="project" value="UniProtKB-SubCell"/>
</dbReference>
<dbReference type="CDD" id="cd00198">
    <property type="entry name" value="vWFA"/>
    <property type="match status" value="1"/>
</dbReference>
<dbReference type="FunFam" id="3.40.50.410:FF:000078">
    <property type="entry name" value="UPF0353 protein RN09_1826"/>
    <property type="match status" value="1"/>
</dbReference>
<dbReference type="Gene3D" id="3.40.50.410">
    <property type="entry name" value="von Willebrand factor, type A domain"/>
    <property type="match status" value="1"/>
</dbReference>
<dbReference type="HAMAP" id="MF_01340">
    <property type="entry name" value="UPF0353"/>
    <property type="match status" value="1"/>
</dbReference>
<dbReference type="InterPro" id="IPR022933">
    <property type="entry name" value="UPF0353"/>
</dbReference>
<dbReference type="InterPro" id="IPR050768">
    <property type="entry name" value="UPF0353/GerABKA_families"/>
</dbReference>
<dbReference type="InterPro" id="IPR002035">
    <property type="entry name" value="VWF_A"/>
</dbReference>
<dbReference type="InterPro" id="IPR036465">
    <property type="entry name" value="vWFA_dom_sf"/>
</dbReference>
<dbReference type="NCBIfam" id="NF010238">
    <property type="entry name" value="PRK13685.1"/>
    <property type="match status" value="1"/>
</dbReference>
<dbReference type="PANTHER" id="PTHR22550:SF5">
    <property type="entry name" value="LEUCINE ZIPPER PROTEIN 4"/>
    <property type="match status" value="1"/>
</dbReference>
<dbReference type="PANTHER" id="PTHR22550">
    <property type="entry name" value="SPORE GERMINATION PROTEIN"/>
    <property type="match status" value="1"/>
</dbReference>
<dbReference type="Pfam" id="PF13519">
    <property type="entry name" value="VWA_2"/>
    <property type="match status" value="1"/>
</dbReference>
<dbReference type="SMART" id="SM00327">
    <property type="entry name" value="VWA"/>
    <property type="match status" value="1"/>
</dbReference>
<dbReference type="SUPFAM" id="SSF53300">
    <property type="entry name" value="vWA-like"/>
    <property type="match status" value="1"/>
</dbReference>
<dbReference type="PROSITE" id="PS50234">
    <property type="entry name" value="VWFA"/>
    <property type="match status" value="1"/>
</dbReference>
<evidence type="ECO:0000255" key="1">
    <source>
        <dbReference type="HAMAP-Rule" id="MF_01340"/>
    </source>
</evidence>
<organism>
    <name type="scientific">Mycobacterium leprae (strain Br4923)</name>
    <dbReference type="NCBI Taxonomy" id="561304"/>
    <lineage>
        <taxon>Bacteria</taxon>
        <taxon>Bacillati</taxon>
        <taxon>Actinomycetota</taxon>
        <taxon>Actinomycetes</taxon>
        <taxon>Mycobacteriales</taxon>
        <taxon>Mycobacteriaceae</taxon>
        <taxon>Mycobacterium</taxon>
    </lineage>
</organism>
<feature type="chain" id="PRO_1000166266" description="UPF0353 protein MLBr01808">
    <location>
        <begin position="1"/>
        <end position="335"/>
    </location>
</feature>
<feature type="transmembrane region" description="Helical" evidence="1">
    <location>
        <begin position="18"/>
        <end position="38"/>
    </location>
</feature>
<feature type="transmembrane region" description="Helical" evidence="1">
    <location>
        <begin position="67"/>
        <end position="87"/>
    </location>
</feature>
<feature type="transmembrane region" description="Helical" evidence="1">
    <location>
        <begin position="309"/>
        <end position="329"/>
    </location>
</feature>
<feature type="domain" description="VWFA" evidence="1">
    <location>
        <begin position="98"/>
        <end position="294"/>
    </location>
</feature>
<name>Y1808_MYCLB</name>
<accession>B8ZS82</accession>
<comment type="subcellular location">
    <subcellularLocation>
        <location evidence="1">Cell membrane</location>
        <topology evidence="1">Multi-pass membrane protein</topology>
    </subcellularLocation>
</comment>
<comment type="similarity">
    <text evidence="1">Belongs to the UPF0353 family.</text>
</comment>
<proteinExistence type="inferred from homology"/>
<reference key="1">
    <citation type="journal article" date="2009" name="Nat. Genet.">
        <title>Comparative genomic and phylogeographic analysis of Mycobacterium leprae.</title>
        <authorList>
            <person name="Monot M."/>
            <person name="Honore N."/>
            <person name="Garnier T."/>
            <person name="Zidane N."/>
            <person name="Sherafi D."/>
            <person name="Paniz-Mondolfi A."/>
            <person name="Matsuoka M."/>
            <person name="Taylor G.M."/>
            <person name="Donoghue H.D."/>
            <person name="Bouwman A."/>
            <person name="Mays S."/>
            <person name="Watson C."/>
            <person name="Lockwood D."/>
            <person name="Khamispour A."/>
            <person name="Dowlati Y."/>
            <person name="Jianping S."/>
            <person name="Rea T.H."/>
            <person name="Vera-Cabrera L."/>
            <person name="Stefani M.M."/>
            <person name="Banu S."/>
            <person name="Macdonald M."/>
            <person name="Sapkota B.R."/>
            <person name="Spencer J.S."/>
            <person name="Thomas J."/>
            <person name="Harshman K."/>
            <person name="Singh P."/>
            <person name="Busso P."/>
            <person name="Gattiker A."/>
            <person name="Rougemont J."/>
            <person name="Brennan P.J."/>
            <person name="Cole S.T."/>
        </authorList>
    </citation>
    <scope>NUCLEOTIDE SEQUENCE [LARGE SCALE GENOMIC DNA]</scope>
    <source>
        <strain>Br4923</strain>
    </source>
</reference>
<gene>
    <name type="ordered locus">MLBr01808</name>
</gene>